<dbReference type="EC" id="2.4.1.182" evidence="1"/>
<dbReference type="EMBL" id="CP000473">
    <property type="protein sequence ID" value="ABJ81770.1"/>
    <property type="molecule type" value="Genomic_DNA"/>
</dbReference>
<dbReference type="SMR" id="Q02AZ6"/>
<dbReference type="FunCoup" id="Q02AZ6">
    <property type="interactions" value="347"/>
</dbReference>
<dbReference type="STRING" id="234267.Acid_0771"/>
<dbReference type="CAZy" id="GT19">
    <property type="family name" value="Glycosyltransferase Family 19"/>
</dbReference>
<dbReference type="KEGG" id="sus:Acid_0771"/>
<dbReference type="eggNOG" id="COG0763">
    <property type="taxonomic scope" value="Bacteria"/>
</dbReference>
<dbReference type="HOGENOM" id="CLU_036577_3_1_0"/>
<dbReference type="InParanoid" id="Q02AZ6"/>
<dbReference type="OrthoDB" id="9801642at2"/>
<dbReference type="UniPathway" id="UPA00973"/>
<dbReference type="GO" id="GO:0016020">
    <property type="term" value="C:membrane"/>
    <property type="evidence" value="ECO:0007669"/>
    <property type="project" value="GOC"/>
</dbReference>
<dbReference type="GO" id="GO:0008915">
    <property type="term" value="F:lipid-A-disaccharide synthase activity"/>
    <property type="evidence" value="ECO:0007669"/>
    <property type="project" value="UniProtKB-UniRule"/>
</dbReference>
<dbReference type="GO" id="GO:0005543">
    <property type="term" value="F:phospholipid binding"/>
    <property type="evidence" value="ECO:0007669"/>
    <property type="project" value="TreeGrafter"/>
</dbReference>
<dbReference type="GO" id="GO:0009245">
    <property type="term" value="P:lipid A biosynthetic process"/>
    <property type="evidence" value="ECO:0007669"/>
    <property type="project" value="UniProtKB-UniRule"/>
</dbReference>
<dbReference type="Gene3D" id="3.40.50.2000">
    <property type="entry name" value="Glycogen Phosphorylase B"/>
    <property type="match status" value="1"/>
</dbReference>
<dbReference type="HAMAP" id="MF_00392">
    <property type="entry name" value="LpxB"/>
    <property type="match status" value="1"/>
</dbReference>
<dbReference type="InterPro" id="IPR003835">
    <property type="entry name" value="Glyco_trans_19"/>
</dbReference>
<dbReference type="NCBIfam" id="TIGR00215">
    <property type="entry name" value="lpxB"/>
    <property type="match status" value="1"/>
</dbReference>
<dbReference type="PANTHER" id="PTHR30372">
    <property type="entry name" value="LIPID-A-DISACCHARIDE SYNTHASE"/>
    <property type="match status" value="1"/>
</dbReference>
<dbReference type="PANTHER" id="PTHR30372:SF4">
    <property type="entry name" value="LIPID-A-DISACCHARIDE SYNTHASE, MITOCHONDRIAL-RELATED"/>
    <property type="match status" value="1"/>
</dbReference>
<dbReference type="Pfam" id="PF02684">
    <property type="entry name" value="LpxB"/>
    <property type="match status" value="1"/>
</dbReference>
<dbReference type="SUPFAM" id="SSF53756">
    <property type="entry name" value="UDP-Glycosyltransferase/glycogen phosphorylase"/>
    <property type="match status" value="1"/>
</dbReference>
<accession>Q02AZ6</accession>
<name>LPXB_SOLUE</name>
<proteinExistence type="inferred from homology"/>
<evidence type="ECO:0000255" key="1">
    <source>
        <dbReference type="HAMAP-Rule" id="MF_00392"/>
    </source>
</evidence>
<comment type="function">
    <text evidence="1">Condensation of UDP-2,3-diacylglucosamine and 2,3-diacylglucosamine-1-phosphate to form lipid A disaccharide, a precursor of lipid A, a phosphorylated glycolipid that anchors the lipopolysaccharide to the outer membrane of the cell.</text>
</comment>
<comment type="catalytic activity">
    <reaction evidence="1">
        <text>a lipid X + a UDP-2-N,3-O-bis[(3R)-3-hydroxyacyl]-alpha-D-glucosamine = a lipid A disaccharide + UDP + H(+)</text>
        <dbReference type="Rhea" id="RHEA:67828"/>
        <dbReference type="ChEBI" id="CHEBI:15378"/>
        <dbReference type="ChEBI" id="CHEBI:58223"/>
        <dbReference type="ChEBI" id="CHEBI:137748"/>
        <dbReference type="ChEBI" id="CHEBI:176338"/>
        <dbReference type="ChEBI" id="CHEBI:176343"/>
        <dbReference type="EC" id="2.4.1.182"/>
    </reaction>
</comment>
<comment type="pathway">
    <text evidence="1">Bacterial outer membrane biogenesis; LPS lipid A biosynthesis.</text>
</comment>
<comment type="similarity">
    <text evidence="1">Belongs to the LpxB family.</text>
</comment>
<feature type="chain" id="PRO_1000049423" description="Lipid-A-disaccharide synthase">
    <location>
        <begin position="1"/>
        <end position="381"/>
    </location>
</feature>
<sequence length="381" mass="42109">MPKILVSAGEASGDLYASLVVQELRRIMPDAEFFGCTGPRLRAAGVRTIVDSADLAVVGLIEVVAHIPRIYGEFRKLLRAAREERPLLAILTDSPDFHLRVARKLHRQEVPVVYLVAPQAWAWRRGRVREMRRTIRRLLCIFPFEEEFFRRYGVPATYIGHPLAGLVHPALSREEFFKKHRLAAERPLVSVLPGSRRGEAARHIPALLDAVDRIYREQAVNVVLPASATTGVAFFQERMGNSPIRVIEGESWDAMAHSDLALAASGTVTVEAALLGTPMVTFYKVTGVSWLAGKFLVDIPFYSMVNLIAGRAVVPELMQSQMTGENLAREALRLLQGGRDREEMKAGLAQVKEKLAGRTGAPGRAALAIQEILEGQVTHVS</sequence>
<gene>
    <name evidence="1" type="primary">lpxB</name>
    <name type="ordered locus">Acid_0771</name>
</gene>
<reference key="1">
    <citation type="journal article" date="2009" name="Appl. Environ. Microbiol.">
        <title>Three genomes from the phylum Acidobacteria provide insight into the lifestyles of these microorganisms in soils.</title>
        <authorList>
            <person name="Ward N.L."/>
            <person name="Challacombe J.F."/>
            <person name="Janssen P.H."/>
            <person name="Henrissat B."/>
            <person name="Coutinho P.M."/>
            <person name="Wu M."/>
            <person name="Xie G."/>
            <person name="Haft D.H."/>
            <person name="Sait M."/>
            <person name="Badger J."/>
            <person name="Barabote R.D."/>
            <person name="Bradley B."/>
            <person name="Brettin T.S."/>
            <person name="Brinkac L.M."/>
            <person name="Bruce D."/>
            <person name="Creasy T."/>
            <person name="Daugherty S.C."/>
            <person name="Davidsen T.M."/>
            <person name="DeBoy R.T."/>
            <person name="Detter J.C."/>
            <person name="Dodson R.J."/>
            <person name="Durkin A.S."/>
            <person name="Ganapathy A."/>
            <person name="Gwinn-Giglio M."/>
            <person name="Han C.S."/>
            <person name="Khouri H."/>
            <person name="Kiss H."/>
            <person name="Kothari S.P."/>
            <person name="Madupu R."/>
            <person name="Nelson K.E."/>
            <person name="Nelson W.C."/>
            <person name="Paulsen I."/>
            <person name="Penn K."/>
            <person name="Ren Q."/>
            <person name="Rosovitz M.J."/>
            <person name="Selengut J.D."/>
            <person name="Shrivastava S."/>
            <person name="Sullivan S.A."/>
            <person name="Tapia R."/>
            <person name="Thompson L.S."/>
            <person name="Watkins K.L."/>
            <person name="Yang Q."/>
            <person name="Yu C."/>
            <person name="Zafar N."/>
            <person name="Zhou L."/>
            <person name="Kuske C.R."/>
        </authorList>
    </citation>
    <scope>NUCLEOTIDE SEQUENCE [LARGE SCALE GENOMIC DNA]</scope>
    <source>
        <strain>Ellin6076</strain>
    </source>
</reference>
<protein>
    <recommendedName>
        <fullName evidence="1">Lipid-A-disaccharide synthase</fullName>
        <ecNumber evidence="1">2.4.1.182</ecNumber>
    </recommendedName>
</protein>
<organism>
    <name type="scientific">Solibacter usitatus (strain Ellin6076)</name>
    <dbReference type="NCBI Taxonomy" id="234267"/>
    <lineage>
        <taxon>Bacteria</taxon>
        <taxon>Pseudomonadati</taxon>
        <taxon>Acidobacteriota</taxon>
        <taxon>Terriglobia</taxon>
        <taxon>Bryobacterales</taxon>
        <taxon>Solibacteraceae</taxon>
        <taxon>Candidatus Solibacter</taxon>
    </lineage>
</organism>
<keyword id="KW-0328">Glycosyltransferase</keyword>
<keyword id="KW-0441">Lipid A biosynthesis</keyword>
<keyword id="KW-0444">Lipid biosynthesis</keyword>
<keyword id="KW-0443">Lipid metabolism</keyword>
<keyword id="KW-0808">Transferase</keyword>